<keyword id="KW-0274">FAD</keyword>
<keyword id="KW-0285">Flavoprotein</keyword>
<keyword id="KW-0489">Methyltransferase</keyword>
<keyword id="KW-0521">NADP</keyword>
<keyword id="KW-0545">Nucleotide biosynthesis</keyword>
<keyword id="KW-1185">Reference proteome</keyword>
<keyword id="KW-0808">Transferase</keyword>
<accession>Q9ZDM6</accession>
<name>THYX_RICPR</name>
<organism>
    <name type="scientific">Rickettsia prowazekii (strain Madrid E)</name>
    <dbReference type="NCBI Taxonomy" id="272947"/>
    <lineage>
        <taxon>Bacteria</taxon>
        <taxon>Pseudomonadati</taxon>
        <taxon>Pseudomonadota</taxon>
        <taxon>Alphaproteobacteria</taxon>
        <taxon>Rickettsiales</taxon>
        <taxon>Rickettsiaceae</taxon>
        <taxon>Rickettsieae</taxon>
        <taxon>Rickettsia</taxon>
        <taxon>typhus group</taxon>
    </lineage>
</organism>
<proteinExistence type="inferred from homology"/>
<protein>
    <recommendedName>
        <fullName evidence="1">Flavin-dependent thymidylate synthase</fullName>
        <shortName evidence="1">FDTS</shortName>
        <ecNumber evidence="1">2.1.1.148</ecNumber>
    </recommendedName>
    <alternativeName>
        <fullName evidence="1">FAD-dependent thymidylate synthase</fullName>
    </alternativeName>
    <alternativeName>
        <fullName evidence="1">Thymidylate synthase ThyX</fullName>
        <shortName evidence="1">TS</shortName>
        <shortName evidence="1">TSase</shortName>
    </alternativeName>
</protein>
<evidence type="ECO:0000255" key="1">
    <source>
        <dbReference type="HAMAP-Rule" id="MF_01408"/>
    </source>
</evidence>
<evidence type="ECO:0000255" key="2">
    <source>
        <dbReference type="PROSITE-ProRule" id="PRU00661"/>
    </source>
</evidence>
<gene>
    <name evidence="1" type="primary">thyX</name>
    <name type="ordered locus">RP301</name>
</gene>
<reference key="1">
    <citation type="journal article" date="1998" name="Nature">
        <title>The genome sequence of Rickettsia prowazekii and the origin of mitochondria.</title>
        <authorList>
            <person name="Andersson S.G.E."/>
            <person name="Zomorodipour A."/>
            <person name="Andersson J.O."/>
            <person name="Sicheritz-Ponten T."/>
            <person name="Alsmark U.C.M."/>
            <person name="Podowski R.M."/>
            <person name="Naeslund A.K."/>
            <person name="Eriksson A.-S."/>
            <person name="Winkler H.H."/>
            <person name="Kurland C.G."/>
        </authorList>
    </citation>
    <scope>NUCLEOTIDE SEQUENCE [LARGE SCALE GENOMIC DNA]</scope>
    <source>
        <strain>Madrid E</strain>
    </source>
</reference>
<comment type="function">
    <text evidence="1">Catalyzes the reductive methylation of 2'-deoxyuridine-5'-monophosphate (dUMP) to 2'-deoxythymidine-5'-monophosphate (dTMP) while utilizing 5,10-methylenetetrahydrofolate (mTHF) as the methyl donor, and NADPH and FADH(2) as the reductant.</text>
</comment>
<comment type="catalytic activity">
    <reaction evidence="1">
        <text>dUMP + (6R)-5,10-methylene-5,6,7,8-tetrahydrofolate + NADPH + H(+) = dTMP + (6S)-5,6,7,8-tetrahydrofolate + NADP(+)</text>
        <dbReference type="Rhea" id="RHEA:29043"/>
        <dbReference type="ChEBI" id="CHEBI:15378"/>
        <dbReference type="ChEBI" id="CHEBI:15636"/>
        <dbReference type="ChEBI" id="CHEBI:57453"/>
        <dbReference type="ChEBI" id="CHEBI:57783"/>
        <dbReference type="ChEBI" id="CHEBI:58349"/>
        <dbReference type="ChEBI" id="CHEBI:63528"/>
        <dbReference type="ChEBI" id="CHEBI:246422"/>
        <dbReference type="EC" id="2.1.1.148"/>
    </reaction>
</comment>
<comment type="cofactor">
    <cofactor evidence="1">
        <name>FAD</name>
        <dbReference type="ChEBI" id="CHEBI:57692"/>
    </cofactor>
    <text evidence="1">Binds 4 FAD per tetramer. Each FAD binding site is formed by three monomers.</text>
</comment>
<comment type="pathway">
    <text evidence="1">Pyrimidine metabolism; dTTP biosynthesis.</text>
</comment>
<comment type="subunit">
    <text evidence="1">Homotetramer.</text>
</comment>
<comment type="similarity">
    <text evidence="1">Belongs to the thymidylate synthase ThyX family.</text>
</comment>
<feature type="chain" id="PRO_0000175573" description="Flavin-dependent thymidylate synthase">
    <location>
        <begin position="1"/>
        <end position="294"/>
    </location>
</feature>
<feature type="domain" description="ThyX" evidence="2">
    <location>
        <begin position="27"/>
        <end position="250"/>
    </location>
</feature>
<feature type="short sequence motif" description="ThyX motif" evidence="1">
    <location>
        <begin position="96"/>
        <end position="106"/>
    </location>
</feature>
<feature type="active site" description="Involved in ionization of N3 of dUMP, leading to its activation" evidence="1">
    <location>
        <position position="216"/>
    </location>
</feature>
<feature type="binding site" evidence="1">
    <location>
        <position position="73"/>
    </location>
    <ligand>
        <name>FAD</name>
        <dbReference type="ChEBI" id="CHEBI:57692"/>
        <note>ligand shared between neighboring subunits</note>
    </ligand>
</feature>
<feature type="binding site" evidence="1">
    <location>
        <begin position="93"/>
        <end position="96"/>
    </location>
    <ligand>
        <name>dUMP</name>
        <dbReference type="ChEBI" id="CHEBI:246422"/>
        <note>ligand shared between dimeric partners</note>
    </ligand>
</feature>
<feature type="binding site" evidence="1">
    <location>
        <begin position="96"/>
        <end position="98"/>
    </location>
    <ligand>
        <name>FAD</name>
        <dbReference type="ChEBI" id="CHEBI:57692"/>
        <note>ligand shared between neighboring subunits</note>
    </ligand>
</feature>
<feature type="binding site" description="in other chain" evidence="1">
    <location>
        <begin position="104"/>
        <end position="108"/>
    </location>
    <ligand>
        <name>dUMP</name>
        <dbReference type="ChEBI" id="CHEBI:246422"/>
        <note>ligand shared between dimeric partners</note>
    </ligand>
</feature>
<feature type="binding site" evidence="1">
    <location>
        <position position="104"/>
    </location>
    <ligand>
        <name>FAD</name>
        <dbReference type="ChEBI" id="CHEBI:57692"/>
        <note>ligand shared between neighboring subunits</note>
    </ligand>
</feature>
<feature type="binding site" description="in other chain" evidence="1">
    <location>
        <position position="189"/>
    </location>
    <ligand>
        <name>dUMP</name>
        <dbReference type="ChEBI" id="CHEBI:246422"/>
        <note>ligand shared between dimeric partners</note>
    </ligand>
</feature>
<feature type="binding site" evidence="1">
    <location>
        <begin position="205"/>
        <end position="207"/>
    </location>
    <ligand>
        <name>FAD</name>
        <dbReference type="ChEBI" id="CHEBI:57692"/>
        <note>ligand shared between neighboring subunits</note>
    </ligand>
</feature>
<feature type="binding site" evidence="1">
    <location>
        <position position="211"/>
    </location>
    <ligand>
        <name>FAD</name>
        <dbReference type="ChEBI" id="CHEBI:57692"/>
        <note>ligand shared between neighboring subunits</note>
    </ligand>
</feature>
<feature type="binding site" evidence="1">
    <location>
        <position position="216"/>
    </location>
    <ligand>
        <name>dUMP</name>
        <dbReference type="ChEBI" id="CHEBI:246422"/>
        <note>ligand shared between dimeric partners</note>
    </ligand>
</feature>
<sequence>MHNTTKRVTVPALEAMLYETIKVLDHGFIRVIDYMGDDSSIVQAARVSYGKGTKQLNQDKGLINYLLRHYHTTPFEMCDIKFHIKLPIFIARQWIRHRTASVNEYSARYSILGNEFYLPDPANIASQSVVNKQCRAGDSVPKKVSEKVLAILEEDARRCYRHYKELMNADEDGNILDENVSGIARELARINLTLNYYTEWYWKINLHNLLHFLRLRTDPKAQYEIRVYAEKILDIVKAWVPFTYEAFEEYRLQGANISRKGLEVIKRMIKGEKVIHETSGMNKREWEELVKIFR</sequence>
<dbReference type="EC" id="2.1.1.148" evidence="1"/>
<dbReference type="EMBL" id="AJ235271">
    <property type="protein sequence ID" value="CAA14762.1"/>
    <property type="molecule type" value="Genomic_DNA"/>
</dbReference>
<dbReference type="PIR" id="H71685">
    <property type="entry name" value="H71685"/>
</dbReference>
<dbReference type="RefSeq" id="NP_220685.1">
    <property type="nucleotide sequence ID" value="NC_000963.1"/>
</dbReference>
<dbReference type="RefSeq" id="WP_004597389.1">
    <property type="nucleotide sequence ID" value="NC_000963.1"/>
</dbReference>
<dbReference type="SMR" id="Q9ZDM6"/>
<dbReference type="STRING" id="272947.gene:17555382"/>
<dbReference type="EnsemblBacteria" id="CAA14762">
    <property type="protein sequence ID" value="CAA14762"/>
    <property type="gene ID" value="CAA14762"/>
</dbReference>
<dbReference type="GeneID" id="57569428"/>
<dbReference type="KEGG" id="rpr:RP301"/>
<dbReference type="PATRIC" id="fig|272947.5.peg.310"/>
<dbReference type="eggNOG" id="COG1351">
    <property type="taxonomic scope" value="Bacteria"/>
</dbReference>
<dbReference type="HOGENOM" id="CLU_067790_0_0_5"/>
<dbReference type="OrthoDB" id="9774464at2"/>
<dbReference type="UniPathway" id="UPA00575"/>
<dbReference type="Proteomes" id="UP000002480">
    <property type="component" value="Chromosome"/>
</dbReference>
<dbReference type="GO" id="GO:0050660">
    <property type="term" value="F:flavin adenine dinucleotide binding"/>
    <property type="evidence" value="ECO:0007669"/>
    <property type="project" value="InterPro"/>
</dbReference>
<dbReference type="GO" id="GO:0070402">
    <property type="term" value="F:NADPH binding"/>
    <property type="evidence" value="ECO:0007669"/>
    <property type="project" value="TreeGrafter"/>
</dbReference>
<dbReference type="GO" id="GO:0050797">
    <property type="term" value="F:thymidylate synthase (FAD) activity"/>
    <property type="evidence" value="ECO:0007669"/>
    <property type="project" value="UniProtKB-UniRule"/>
</dbReference>
<dbReference type="GO" id="GO:0004799">
    <property type="term" value="F:thymidylate synthase activity"/>
    <property type="evidence" value="ECO:0007669"/>
    <property type="project" value="TreeGrafter"/>
</dbReference>
<dbReference type="GO" id="GO:0006231">
    <property type="term" value="P:dTMP biosynthetic process"/>
    <property type="evidence" value="ECO:0007669"/>
    <property type="project" value="UniProtKB-UniRule"/>
</dbReference>
<dbReference type="GO" id="GO:0006235">
    <property type="term" value="P:dTTP biosynthetic process"/>
    <property type="evidence" value="ECO:0007669"/>
    <property type="project" value="UniProtKB-UniRule"/>
</dbReference>
<dbReference type="GO" id="GO:0032259">
    <property type="term" value="P:methylation"/>
    <property type="evidence" value="ECO:0007669"/>
    <property type="project" value="UniProtKB-KW"/>
</dbReference>
<dbReference type="CDD" id="cd20175">
    <property type="entry name" value="ThyX"/>
    <property type="match status" value="1"/>
</dbReference>
<dbReference type="Gene3D" id="3.30.1360.170">
    <property type="match status" value="1"/>
</dbReference>
<dbReference type="HAMAP" id="MF_01408">
    <property type="entry name" value="ThyX"/>
    <property type="match status" value="1"/>
</dbReference>
<dbReference type="InterPro" id="IPR003669">
    <property type="entry name" value="Thymidylate_synthase_ThyX"/>
</dbReference>
<dbReference type="InterPro" id="IPR036098">
    <property type="entry name" value="Thymidylate_synthase_ThyX_sf"/>
</dbReference>
<dbReference type="NCBIfam" id="TIGR02170">
    <property type="entry name" value="thyX"/>
    <property type="match status" value="1"/>
</dbReference>
<dbReference type="PANTHER" id="PTHR34934">
    <property type="entry name" value="FLAVIN-DEPENDENT THYMIDYLATE SYNTHASE"/>
    <property type="match status" value="1"/>
</dbReference>
<dbReference type="PANTHER" id="PTHR34934:SF1">
    <property type="entry name" value="FLAVIN-DEPENDENT THYMIDYLATE SYNTHASE"/>
    <property type="match status" value="1"/>
</dbReference>
<dbReference type="Pfam" id="PF02511">
    <property type="entry name" value="Thy1"/>
    <property type="match status" value="1"/>
</dbReference>
<dbReference type="SUPFAM" id="SSF69796">
    <property type="entry name" value="Thymidylate synthase-complementing protein Thy1"/>
    <property type="match status" value="1"/>
</dbReference>
<dbReference type="PROSITE" id="PS51331">
    <property type="entry name" value="THYX"/>
    <property type="match status" value="1"/>
</dbReference>